<keyword id="KW-0032">Aminotransferase</keyword>
<keyword id="KW-0046">Antibiotic resistance</keyword>
<keyword id="KW-0441">Lipid A biosynthesis</keyword>
<keyword id="KW-0444">Lipid biosynthesis</keyword>
<keyword id="KW-0443">Lipid metabolism</keyword>
<keyword id="KW-0448">Lipopolysaccharide biosynthesis</keyword>
<keyword id="KW-0663">Pyridoxal phosphate</keyword>
<keyword id="KW-0808">Transferase</keyword>
<feature type="chain" id="PRO_1000137956" description="UDP-4-amino-4-deoxy-L-arabinose--oxoglutarate aminotransferase">
    <location>
        <begin position="1"/>
        <end position="379"/>
    </location>
</feature>
<feature type="modified residue" description="N6-(pyridoxal phosphate)lysine" evidence="1">
    <location>
        <position position="182"/>
    </location>
</feature>
<name>ARNB_ECODH</name>
<organism>
    <name type="scientific">Escherichia coli (strain K12 / DH10B)</name>
    <dbReference type="NCBI Taxonomy" id="316385"/>
    <lineage>
        <taxon>Bacteria</taxon>
        <taxon>Pseudomonadati</taxon>
        <taxon>Pseudomonadota</taxon>
        <taxon>Gammaproteobacteria</taxon>
        <taxon>Enterobacterales</taxon>
        <taxon>Enterobacteriaceae</taxon>
        <taxon>Escherichia</taxon>
    </lineage>
</organism>
<gene>
    <name evidence="1" type="primary">arnB</name>
    <name type="ordered locus">ECDH10B_2413</name>
</gene>
<accession>B1X8W6</accession>
<proteinExistence type="inferred from homology"/>
<evidence type="ECO:0000255" key="1">
    <source>
        <dbReference type="HAMAP-Rule" id="MF_01167"/>
    </source>
</evidence>
<comment type="function">
    <text evidence="1">Catalyzes the conversion of UDP-4-keto-arabinose (UDP-Ara4O) to UDP-4-amino-4-deoxy-L-arabinose (UDP-L-Ara4N). The modified arabinose is attached to lipid A and is required for resistance to polymyxin and cationic antimicrobial peptides.</text>
</comment>
<comment type="catalytic activity">
    <reaction evidence="1">
        <text>UDP-4-amino-4-deoxy-beta-L-arabinose + 2-oxoglutarate = UDP-beta-L-threo-pentopyranos-4-ulose + L-glutamate</text>
        <dbReference type="Rhea" id="RHEA:24710"/>
        <dbReference type="ChEBI" id="CHEBI:16810"/>
        <dbReference type="ChEBI" id="CHEBI:29985"/>
        <dbReference type="ChEBI" id="CHEBI:58708"/>
        <dbReference type="ChEBI" id="CHEBI:58710"/>
        <dbReference type="EC" id="2.6.1.87"/>
    </reaction>
</comment>
<comment type="cofactor">
    <cofactor evidence="1">
        <name>pyridoxal 5'-phosphate</name>
        <dbReference type="ChEBI" id="CHEBI:597326"/>
    </cofactor>
</comment>
<comment type="pathway">
    <text evidence="1">Nucleotide-sugar biosynthesis; UDP-4-deoxy-4-formamido-beta-L-arabinose biosynthesis; UDP-4-deoxy-4-formamido-beta-L-arabinose from UDP-alpha-D-glucuronate: step 2/3.</text>
</comment>
<comment type="pathway">
    <text evidence="1">Bacterial outer membrane biogenesis; lipopolysaccharide biosynthesis.</text>
</comment>
<comment type="subunit">
    <text evidence="1">Homodimer.</text>
</comment>
<comment type="similarity">
    <text evidence="1">Belongs to the DegT/DnrJ/EryC1 family. ArnB subfamily.</text>
</comment>
<dbReference type="EC" id="2.6.1.87" evidence="1"/>
<dbReference type="EMBL" id="CP000948">
    <property type="protein sequence ID" value="ACB03413.1"/>
    <property type="molecule type" value="Genomic_DNA"/>
</dbReference>
<dbReference type="RefSeq" id="WP_001295286.1">
    <property type="nucleotide sequence ID" value="NC_010473.1"/>
</dbReference>
<dbReference type="SMR" id="B1X8W6"/>
<dbReference type="KEGG" id="ecd:ECDH10B_2413"/>
<dbReference type="HOGENOM" id="CLU_033332_0_3_6"/>
<dbReference type="UniPathway" id="UPA00030"/>
<dbReference type="UniPathway" id="UPA00032">
    <property type="reaction ID" value="UER00493"/>
</dbReference>
<dbReference type="GO" id="GO:0016020">
    <property type="term" value="C:membrane"/>
    <property type="evidence" value="ECO:0007669"/>
    <property type="project" value="GOC"/>
</dbReference>
<dbReference type="GO" id="GO:0030170">
    <property type="term" value="F:pyridoxal phosphate binding"/>
    <property type="evidence" value="ECO:0007669"/>
    <property type="project" value="TreeGrafter"/>
</dbReference>
<dbReference type="GO" id="GO:0099620">
    <property type="term" value="F:UDP-4-amino-4-deoxy-L-arabinose aminotransferase"/>
    <property type="evidence" value="ECO:0007669"/>
    <property type="project" value="UniProtKB-EC"/>
</dbReference>
<dbReference type="GO" id="GO:0009245">
    <property type="term" value="P:lipid A biosynthetic process"/>
    <property type="evidence" value="ECO:0007669"/>
    <property type="project" value="UniProtKB-KW"/>
</dbReference>
<dbReference type="GO" id="GO:0009103">
    <property type="term" value="P:lipopolysaccharide biosynthetic process"/>
    <property type="evidence" value="ECO:0007669"/>
    <property type="project" value="UniProtKB-UniRule"/>
</dbReference>
<dbReference type="GO" id="GO:0046677">
    <property type="term" value="P:response to antibiotic"/>
    <property type="evidence" value="ECO:0007669"/>
    <property type="project" value="UniProtKB-KW"/>
</dbReference>
<dbReference type="CDD" id="cd00616">
    <property type="entry name" value="AHBA_syn"/>
    <property type="match status" value="1"/>
</dbReference>
<dbReference type="FunFam" id="3.40.640.10:FF:000040">
    <property type="entry name" value="UDP-4-amino-4-deoxy-L-arabinose--oxoglutarate aminotransferase"/>
    <property type="match status" value="1"/>
</dbReference>
<dbReference type="FunFam" id="3.90.1150.10:FF:000030">
    <property type="entry name" value="UDP-4-amino-4-deoxy-L-arabinose--oxoglutarate aminotransferase"/>
    <property type="match status" value="1"/>
</dbReference>
<dbReference type="Gene3D" id="3.90.1150.10">
    <property type="entry name" value="Aspartate Aminotransferase, domain 1"/>
    <property type="match status" value="1"/>
</dbReference>
<dbReference type="Gene3D" id="3.40.640.10">
    <property type="entry name" value="Type I PLP-dependent aspartate aminotransferase-like (Major domain)"/>
    <property type="match status" value="1"/>
</dbReference>
<dbReference type="HAMAP" id="MF_01167">
    <property type="entry name" value="ArnB_transfer"/>
    <property type="match status" value="1"/>
</dbReference>
<dbReference type="InterPro" id="IPR022850">
    <property type="entry name" value="ArnB_NH2Trfase"/>
</dbReference>
<dbReference type="InterPro" id="IPR000653">
    <property type="entry name" value="DegT/StrS_aminotransferase"/>
</dbReference>
<dbReference type="InterPro" id="IPR015424">
    <property type="entry name" value="PyrdxlP-dep_Trfase"/>
</dbReference>
<dbReference type="InterPro" id="IPR015421">
    <property type="entry name" value="PyrdxlP-dep_Trfase_major"/>
</dbReference>
<dbReference type="InterPro" id="IPR015422">
    <property type="entry name" value="PyrdxlP-dep_Trfase_small"/>
</dbReference>
<dbReference type="NCBIfam" id="NF008658">
    <property type="entry name" value="PRK11658.1"/>
    <property type="match status" value="1"/>
</dbReference>
<dbReference type="PANTHER" id="PTHR30244">
    <property type="entry name" value="TRANSAMINASE"/>
    <property type="match status" value="1"/>
</dbReference>
<dbReference type="PANTHER" id="PTHR30244:SF41">
    <property type="entry name" value="UDP-4-AMINO-4-DEOXY-L-ARABINOSE--OXOGLUTARATE AMINOTRANSFERASE"/>
    <property type="match status" value="1"/>
</dbReference>
<dbReference type="Pfam" id="PF01041">
    <property type="entry name" value="DegT_DnrJ_EryC1"/>
    <property type="match status" value="1"/>
</dbReference>
<dbReference type="PIRSF" id="PIRSF000390">
    <property type="entry name" value="PLP_StrS"/>
    <property type="match status" value="1"/>
</dbReference>
<dbReference type="SUPFAM" id="SSF53383">
    <property type="entry name" value="PLP-dependent transferases"/>
    <property type="match status" value="1"/>
</dbReference>
<protein>
    <recommendedName>
        <fullName evidence="1">UDP-4-amino-4-deoxy-L-arabinose--oxoglutarate aminotransferase</fullName>
        <ecNumber evidence="1">2.6.1.87</ecNumber>
    </recommendedName>
    <alternativeName>
        <fullName evidence="1">UDP-(beta-L-threo-pentapyranosyl-4''-ulose diphosphate) aminotransferase</fullName>
        <shortName evidence="1">UDP-Ara4O aminotransferase</shortName>
    </alternativeName>
    <alternativeName>
        <fullName evidence="1">UDP-4-amino-4-deoxy-L-arabinose aminotransferase</fullName>
    </alternativeName>
</protein>
<reference key="1">
    <citation type="journal article" date="2008" name="J. Bacteriol.">
        <title>The complete genome sequence of Escherichia coli DH10B: insights into the biology of a laboratory workhorse.</title>
        <authorList>
            <person name="Durfee T."/>
            <person name="Nelson R."/>
            <person name="Baldwin S."/>
            <person name="Plunkett G. III"/>
            <person name="Burland V."/>
            <person name="Mau B."/>
            <person name="Petrosino J.F."/>
            <person name="Qin X."/>
            <person name="Muzny D.M."/>
            <person name="Ayele M."/>
            <person name="Gibbs R.A."/>
            <person name="Csorgo B."/>
            <person name="Posfai G."/>
            <person name="Weinstock G.M."/>
            <person name="Blattner F.R."/>
        </authorList>
    </citation>
    <scope>NUCLEOTIDE SEQUENCE [LARGE SCALE GENOMIC DNA]</scope>
    <source>
        <strain>K12 / DH10B</strain>
    </source>
</reference>
<sequence>MSEFLPFSRPAMGVEELAAVKEVLESGWITTGPKNQALEQAFCQLTGNQHAIAVSSATAGMHITLMALKIGKGDEVITPSLTWVSTLNMISLLGATPVMVDVDRDTLMVTPEAIESAITPRTKAIIPVHYAGAPADIDAIRAIGERYGIAVIEDAAHAVGTYYKGRHIGAKGTAIFSFHAIKNITCAEGGLIVTDNENLARQLRMLKFHGLGVDAYDRQTWGRAPQAEVLTPGYKYNLTDINAAIALTQLVKLEHLNTRRREIAQQYQQALAALPFQPLSLPAWPHVHAWHLFIIRVDEQRCGISRDALMEALKERGIGTGLHFRAAHTQKYYRERFPTLSLPNTEWNSERICSLPLFPDMTTADADHVITALQQLAGQ</sequence>